<feature type="chain" id="PRO_0000072614" description="Transposon Tn7 transposition protein TnsD">
    <location>
        <begin position="1"/>
        <end position="508"/>
    </location>
</feature>
<feature type="DNA-binding region" description="H-T-H motif" evidence="1">
    <location>
        <begin position="222"/>
        <end position="241"/>
    </location>
</feature>
<comment type="function">
    <text>Required for Tn7 transposition. It may at least play a role in DNA sequence recognition. It seems to be required for specific binding to a region of att-Tn7.</text>
</comment>
<comment type="function">
    <text>TnsABC + TnsD promote high-frequency insertion of Tn7 into a specific target site known as att-Tn7 whereas TnsABC + TnsE promote low-frequency insertion into many different sites.</text>
</comment>
<gene>
    <name type="primary">tnsD</name>
</gene>
<proteinExistence type="evidence at protein level"/>
<evidence type="ECO:0000250" key="1"/>
<geneLocation type="plasmid">
    <name>R721</name>
</geneLocation>
<name>TNSD_ECOLX</name>
<keyword id="KW-0002">3D-structure</keyword>
<keyword id="KW-0233">DNA recombination</keyword>
<keyword id="KW-0238">DNA-binding</keyword>
<keyword id="KW-0614">Plasmid</keyword>
<keyword id="KW-0814">Transposable element</keyword>
<keyword id="KW-0815">Transposition</keyword>
<dbReference type="EMBL" id="X17693">
    <property type="protein sequence ID" value="CAA35686.1"/>
    <property type="molecule type" value="Genomic_DNA"/>
</dbReference>
<dbReference type="EMBL" id="AP002527">
    <property type="protein sequence ID" value="BAB12610.1"/>
    <property type="molecule type" value="Genomic_DNA"/>
</dbReference>
<dbReference type="EMBL" id="M37393">
    <property type="protein sequence ID" value="AAA24682.1"/>
    <property type="molecule type" value="Genomic_DNA"/>
</dbReference>
<dbReference type="PIR" id="S12640">
    <property type="entry name" value="S12640"/>
</dbReference>
<dbReference type="RefSeq" id="NP_065317.1">
    <property type="nucleotide sequence ID" value="NC_002525.1"/>
</dbReference>
<dbReference type="RefSeq" id="WP_001243518.1">
    <property type="nucleotide sequence ID" value="NZ_WWEV01000116.1"/>
</dbReference>
<dbReference type="PDB" id="8GLU">
    <property type="method" value="EM"/>
    <property type="resolution" value="3.57 A"/>
    <property type="chains" value="X=1-318"/>
</dbReference>
<dbReference type="PDB" id="8GLW">
    <property type="method" value="EM"/>
    <property type="resolution" value="3.51 A"/>
    <property type="chains" value="X/Y=1-318"/>
</dbReference>
<dbReference type="PDB" id="8GLX">
    <property type="method" value="EM"/>
    <property type="resolution" value="3.88 A"/>
    <property type="chains" value="X/Y=1-318"/>
</dbReference>
<dbReference type="PDB" id="8VCJ">
    <property type="method" value="EM"/>
    <property type="resolution" value="3.32 A"/>
    <property type="chains" value="X/Y=1-318"/>
</dbReference>
<dbReference type="PDB" id="8VCT">
    <property type="method" value="EM"/>
    <property type="resolution" value="3.83 A"/>
    <property type="chains" value="X/Y=1-318"/>
</dbReference>
<dbReference type="PDBsum" id="8GLU"/>
<dbReference type="PDBsum" id="8GLW"/>
<dbReference type="PDBsum" id="8GLX"/>
<dbReference type="PDBsum" id="8VCJ"/>
<dbReference type="PDBsum" id="8VCT"/>
<dbReference type="EMDB" id="EMD-40218"/>
<dbReference type="EMDB" id="EMD-40221"/>
<dbReference type="EMDB" id="EMD-40222"/>
<dbReference type="EMDB" id="EMD-43138"/>
<dbReference type="EMDB" id="EMD-43140"/>
<dbReference type="SMR" id="P13991"/>
<dbReference type="GO" id="GO:0003677">
    <property type="term" value="F:DNA binding"/>
    <property type="evidence" value="ECO:0007669"/>
    <property type="project" value="UniProtKB-KW"/>
</dbReference>
<dbReference type="GO" id="GO:0006310">
    <property type="term" value="P:DNA recombination"/>
    <property type="evidence" value="ECO:0007669"/>
    <property type="project" value="UniProtKB-KW"/>
</dbReference>
<dbReference type="GO" id="GO:0032196">
    <property type="term" value="P:transposition"/>
    <property type="evidence" value="ECO:0007669"/>
    <property type="project" value="UniProtKB-KW"/>
</dbReference>
<dbReference type="InterPro" id="IPR009492">
    <property type="entry name" value="TniQ"/>
</dbReference>
<dbReference type="InterPro" id="IPR032750">
    <property type="entry name" value="TnsD_C"/>
</dbReference>
<dbReference type="Pfam" id="PF06527">
    <property type="entry name" value="TniQ"/>
    <property type="match status" value="1"/>
</dbReference>
<dbReference type="Pfam" id="PF15978">
    <property type="entry name" value="TnsD"/>
    <property type="match status" value="2"/>
</dbReference>
<sequence length="508" mass="59140">MRNFPVPYSNELIYSTIARAGVYQGIVSPKQLLDEVYGNRKVVATLGLPSHLGVIARHLHQTGRYAVQQLIYEHTLFPLYAPFVGKERRDEAIRLMEYQAQGAVHLMLGVAASRVKSDNRFRYCPDCVALQLNRYGEAFWQRDWYLPALPYCPKHGALVFFDRAVDDHRHQFWALGHTELLSDYPKDSLSQLTALAAYIAPLLDAPRAQELSPSLEQWTLFYQRLAQDLGLTKSKHIRHDLVAERVRQTFSDEALEKLDLKLAENKDTCWLKSIFRKHRKAFSYLQHSIVWQALLPKLTVIEALQQASALTEHSITTRPVSQSVQPNSEDLSVKHKDWQQLVHKYQGIKAARQSLEGGVLYAWLYRHDRDWLVHWNQQHQQERLAPAPRVDWNQRDRIAVRQLLRIIKRLDSSLDHPRATSSWLLKQTPNGTSLAKNLQKLPLVALCLKRYSESVEDYQIRRISQAFIKLKQEDVELRRWRLLRSATLSKERITEEAQRFLEMVYGEE</sequence>
<protein>
    <recommendedName>
        <fullName>Transposon Tn7 transposition protein TnsD</fullName>
    </recommendedName>
</protein>
<organism>
    <name type="scientific">Escherichia coli</name>
    <dbReference type="NCBI Taxonomy" id="562"/>
    <lineage>
        <taxon>Bacteria</taxon>
        <taxon>Pseudomonadati</taxon>
        <taxon>Pseudomonadota</taxon>
        <taxon>Gammaproteobacteria</taxon>
        <taxon>Enterobacterales</taxon>
        <taxon>Enterobacteriaceae</taxon>
        <taxon>Escherichia</taxon>
    </lineage>
</organism>
<reference key="1">
    <citation type="journal article" date="1990" name="Nucleic Acids Res.">
        <title>DNA sequence analysis of five genes; tnsA, B, C, D and E, required for Tn7 transposition.</title>
        <authorList>
            <person name="Flores C."/>
            <person name="Qadri M.I."/>
            <person name="Lichtenstein C."/>
        </authorList>
    </citation>
    <scope>NUCLEOTIDE SEQUENCE [GENOMIC DNA]</scope>
</reference>
<reference key="2">
    <citation type="submission" date="2000-06" db="EMBL/GenBank/DDBJ databases">
        <title>Organization and diversification of plasmid genomes: complete nucleotide sequence of the R721 genome.</title>
        <authorList>
            <person name="Sampei G."/>
            <person name="Motomura K."/>
            <person name="Masuda S."/>
            <person name="Yamaguchi T."/>
            <person name="Ando K."/>
            <person name="Oishi T."/>
            <person name="Furuya N."/>
            <person name="Komano T."/>
            <person name="Mizobuchi K."/>
        </authorList>
    </citation>
    <scope>NUCLEOTIDE SEQUENCE [GENOMIC DNA]</scope>
    <source>
        <plasmid>R721</plasmid>
    </source>
</reference>
<reference key="3">
    <citation type="journal article" date="1990" name="Gene">
        <title>Identification of transposition proteins encoded by the bacterial transposon Tn7.</title>
        <authorList>
            <person name="Orle K.A."/>
            <person name="Craig N.L."/>
        </authorList>
    </citation>
    <scope>NUCLEOTIDE SEQUENCE [GENOMIC DNA] OF 1-39</scope>
</reference>
<reference key="4">
    <citation type="journal article" date="1991" name="Gene">
        <authorList>
            <person name="Orle K.A."/>
            <person name="Craig N.L."/>
        </authorList>
    </citation>
    <scope>ERRATUM OF PUBMED:1655576</scope>
</reference>
<accession>P13991</accession>
<accession>Q7AJH7</accession>